<name>GSHB_YEAST</name>
<organism>
    <name type="scientific">Saccharomyces cerevisiae (strain ATCC 204508 / S288c)</name>
    <name type="common">Baker's yeast</name>
    <dbReference type="NCBI Taxonomy" id="559292"/>
    <lineage>
        <taxon>Eukaryota</taxon>
        <taxon>Fungi</taxon>
        <taxon>Dikarya</taxon>
        <taxon>Ascomycota</taxon>
        <taxon>Saccharomycotina</taxon>
        <taxon>Saccharomycetes</taxon>
        <taxon>Saccharomycetales</taxon>
        <taxon>Saccharomycetaceae</taxon>
        <taxon>Saccharomyces</taxon>
    </lineage>
</organism>
<keyword id="KW-0002">3D-structure</keyword>
<keyword id="KW-0067">ATP-binding</keyword>
<keyword id="KW-0317">Glutathione biosynthesis</keyword>
<keyword id="KW-0436">Ligase</keyword>
<keyword id="KW-0460">Magnesium</keyword>
<keyword id="KW-0479">Metal-binding</keyword>
<keyword id="KW-0547">Nucleotide-binding</keyword>
<keyword id="KW-1185">Reference proteome</keyword>
<sequence>MAHYPPSKDQLNELIQEVNQWAITNGLSMYPPKFEENPSNASVSPVTIYPTPIPRKCFDEAVQIQPVFNELYARITQDMAQPDSYLHKTTEALALSDSEFTGKLWSLYLATLKSAQYKKQNFRLGIFRSDYLIDKKKGTEQIKQVEFNTVSVSFAGLSEKVDRLHSYLNRANKYDPKGPIYNDQNMVISDSGYLLSKALAKAVESYKSQQSSSTTSDPIVAFIVQRNERNVFDQKVLELNLLEKFGTKSVRLTFDDVNDKLFIDDKTGKLFIRDTEQEIAVVYYRTGYTTTDYTSEKDWEARLFLEKSFAIKAPDLLTQLSGSKKIQQLLTDEGVLGKYISDAEKKSSLLKTFVKIYPLDDTKLGREGKRLALSEPSKYVLKPQREGGGNNVYKENIPNFLKGIEERHWDAYILMELIEPELNENNIILRDNKSYNEPIISELGIYGCVLFNDEQVLSNEFSGSLLRSKFNTSNEGGVAAGFGCLDSIILY</sequence>
<gene>
    <name type="primary">GSH2</name>
    <name type="ordered locus">YOL049W</name>
</gene>
<dbReference type="EC" id="6.3.2.3"/>
<dbReference type="EMBL" id="Y13804">
    <property type="protein sequence ID" value="CAA74136.1"/>
    <property type="molecule type" value="Genomic_DNA"/>
</dbReference>
<dbReference type="EMBL" id="Z74791">
    <property type="protein sequence ID" value="CAA99054.1"/>
    <property type="molecule type" value="Genomic_DNA"/>
</dbReference>
<dbReference type="EMBL" id="AY723864">
    <property type="protein sequence ID" value="AAU09781.1"/>
    <property type="molecule type" value="Genomic_DNA"/>
</dbReference>
<dbReference type="EMBL" id="BK006948">
    <property type="protein sequence ID" value="DAA10734.1"/>
    <property type="molecule type" value="Genomic_DNA"/>
</dbReference>
<dbReference type="PIR" id="S66734">
    <property type="entry name" value="S66734"/>
</dbReference>
<dbReference type="RefSeq" id="NP_014593.1">
    <property type="nucleotide sequence ID" value="NM_001183303.1"/>
</dbReference>
<dbReference type="PDB" id="1M0T">
    <property type="method" value="X-ray"/>
    <property type="resolution" value="2.30 A"/>
    <property type="chains" value="A/B=1-491"/>
</dbReference>
<dbReference type="PDB" id="1M0W">
    <property type="method" value="X-ray"/>
    <property type="resolution" value="1.80 A"/>
    <property type="chains" value="A/B=1-491"/>
</dbReference>
<dbReference type="PDBsum" id="1M0T"/>
<dbReference type="PDBsum" id="1M0W"/>
<dbReference type="SMR" id="Q08220"/>
<dbReference type="BioGRID" id="34354">
    <property type="interactions" value="141"/>
</dbReference>
<dbReference type="FunCoup" id="Q08220">
    <property type="interactions" value="1049"/>
</dbReference>
<dbReference type="IntAct" id="Q08220">
    <property type="interactions" value="2"/>
</dbReference>
<dbReference type="STRING" id="4932.YOL049W"/>
<dbReference type="GlyGen" id="Q08220">
    <property type="glycosylation" value="1 site"/>
</dbReference>
<dbReference type="iPTMnet" id="Q08220"/>
<dbReference type="PaxDb" id="4932-YOL049W"/>
<dbReference type="PeptideAtlas" id="Q08220"/>
<dbReference type="EnsemblFungi" id="YOL049W_mRNA">
    <property type="protein sequence ID" value="YOL049W"/>
    <property type="gene ID" value="YOL049W"/>
</dbReference>
<dbReference type="GeneID" id="854108"/>
<dbReference type="KEGG" id="sce:YOL049W"/>
<dbReference type="AGR" id="SGD:S000005409"/>
<dbReference type="SGD" id="S000005409">
    <property type="gene designation" value="GSH2"/>
</dbReference>
<dbReference type="VEuPathDB" id="FungiDB:YOL049W"/>
<dbReference type="eggNOG" id="KOG0021">
    <property type="taxonomic scope" value="Eukaryota"/>
</dbReference>
<dbReference type="GeneTree" id="ENSGT00390000013764"/>
<dbReference type="HOGENOM" id="CLU_025152_2_1_1"/>
<dbReference type="InParanoid" id="Q08220"/>
<dbReference type="OMA" id="NGLVMYP"/>
<dbReference type="OrthoDB" id="2020073at2759"/>
<dbReference type="BioCyc" id="YEAST:YOL049W-MONOMER"/>
<dbReference type="BRENDA" id="6.3.2.3">
    <property type="organism ID" value="984"/>
</dbReference>
<dbReference type="Reactome" id="R-SCE-174403">
    <property type="pathway name" value="Glutathione synthesis and recycling"/>
</dbReference>
<dbReference type="UniPathway" id="UPA00142">
    <property type="reaction ID" value="UER00210"/>
</dbReference>
<dbReference type="BioGRID-ORCS" id="854108">
    <property type="hits" value="0 hits in 10 CRISPR screens"/>
</dbReference>
<dbReference type="EvolutionaryTrace" id="Q08220"/>
<dbReference type="PRO" id="PR:Q08220"/>
<dbReference type="Proteomes" id="UP000002311">
    <property type="component" value="Chromosome XV"/>
</dbReference>
<dbReference type="RNAct" id="Q08220">
    <property type="molecule type" value="protein"/>
</dbReference>
<dbReference type="GO" id="GO:0005737">
    <property type="term" value="C:cytoplasm"/>
    <property type="evidence" value="ECO:0000304"/>
    <property type="project" value="SGD"/>
</dbReference>
<dbReference type="GO" id="GO:0005829">
    <property type="term" value="C:cytosol"/>
    <property type="evidence" value="ECO:0000318"/>
    <property type="project" value="GO_Central"/>
</dbReference>
<dbReference type="GO" id="GO:0005524">
    <property type="term" value="F:ATP binding"/>
    <property type="evidence" value="ECO:0000314"/>
    <property type="project" value="UniProtKB"/>
</dbReference>
<dbReference type="GO" id="GO:0043295">
    <property type="term" value="F:glutathione binding"/>
    <property type="evidence" value="ECO:0000314"/>
    <property type="project" value="UniProtKB"/>
</dbReference>
<dbReference type="GO" id="GO:0004363">
    <property type="term" value="F:glutathione synthase activity"/>
    <property type="evidence" value="ECO:0000314"/>
    <property type="project" value="SGD"/>
</dbReference>
<dbReference type="GO" id="GO:0000287">
    <property type="term" value="F:magnesium ion binding"/>
    <property type="evidence" value="ECO:0000314"/>
    <property type="project" value="UniProtKB"/>
</dbReference>
<dbReference type="GO" id="GO:0042803">
    <property type="term" value="F:protein homodimerization activity"/>
    <property type="evidence" value="ECO:0000314"/>
    <property type="project" value="UniProtKB"/>
</dbReference>
<dbReference type="GO" id="GO:0006750">
    <property type="term" value="P:glutathione biosynthetic process"/>
    <property type="evidence" value="ECO:0000315"/>
    <property type="project" value="SGD"/>
</dbReference>
<dbReference type="FunFam" id="3.30.1490.50:FF:000002">
    <property type="entry name" value="Glutathione synthetase"/>
    <property type="match status" value="1"/>
</dbReference>
<dbReference type="FunFam" id="3.40.50.1760:FF:000001">
    <property type="entry name" value="Glutathione synthetase"/>
    <property type="match status" value="1"/>
</dbReference>
<dbReference type="Gene3D" id="3.30.1490.50">
    <property type="match status" value="1"/>
</dbReference>
<dbReference type="Gene3D" id="3.30.1490.80">
    <property type="match status" value="1"/>
</dbReference>
<dbReference type="Gene3D" id="3.30.470.20">
    <property type="entry name" value="ATP-grasp fold, B domain"/>
    <property type="match status" value="1"/>
</dbReference>
<dbReference type="Gene3D" id="3.40.50.1760">
    <property type="entry name" value="Glutathione synthase, substrate-binding domain superfamily, eukaryotic"/>
    <property type="match status" value="1"/>
</dbReference>
<dbReference type="Gene3D" id="1.10.1080.10">
    <property type="entry name" value="Glutathione Synthetase, Chain A, domain 3"/>
    <property type="match status" value="1"/>
</dbReference>
<dbReference type="InterPro" id="IPR005615">
    <property type="entry name" value="Glutathione_synthase"/>
</dbReference>
<dbReference type="InterPro" id="IPR014042">
    <property type="entry name" value="Glutathione_synthase_a-hlx"/>
</dbReference>
<dbReference type="InterPro" id="IPR014709">
    <property type="entry name" value="Glutathione_synthase_C_euk"/>
</dbReference>
<dbReference type="InterPro" id="IPR014049">
    <property type="entry name" value="Glutathione_synthase_N_euk"/>
</dbReference>
<dbReference type="InterPro" id="IPR037013">
    <property type="entry name" value="GSH-S_sub-bd_sf"/>
</dbReference>
<dbReference type="InterPro" id="IPR004887">
    <property type="entry name" value="GSH_synth_subst-bd"/>
</dbReference>
<dbReference type="InterPro" id="IPR016185">
    <property type="entry name" value="PreATP-grasp_dom_sf"/>
</dbReference>
<dbReference type="NCBIfam" id="TIGR01986">
    <property type="entry name" value="glut_syn_euk"/>
    <property type="match status" value="1"/>
</dbReference>
<dbReference type="PANTHER" id="PTHR11130">
    <property type="entry name" value="GLUTATHIONE SYNTHETASE"/>
    <property type="match status" value="1"/>
</dbReference>
<dbReference type="PANTHER" id="PTHR11130:SF0">
    <property type="entry name" value="GLUTATHIONE SYNTHETASE"/>
    <property type="match status" value="1"/>
</dbReference>
<dbReference type="Pfam" id="PF03917">
    <property type="entry name" value="GSH_synth_ATP"/>
    <property type="match status" value="1"/>
</dbReference>
<dbReference type="Pfam" id="PF03199">
    <property type="entry name" value="GSH_synthase"/>
    <property type="match status" value="1"/>
</dbReference>
<dbReference type="PIRSF" id="PIRSF001558">
    <property type="entry name" value="GSHase"/>
    <property type="match status" value="1"/>
</dbReference>
<dbReference type="SUPFAM" id="SSF56059">
    <property type="entry name" value="Glutathione synthetase ATP-binding domain-like"/>
    <property type="match status" value="1"/>
</dbReference>
<dbReference type="SUPFAM" id="SSF52440">
    <property type="entry name" value="PreATP-grasp domain"/>
    <property type="match status" value="1"/>
</dbReference>
<comment type="catalytic activity">
    <reaction evidence="4">
        <text>gamma-L-glutamyl-L-cysteine + glycine + ATP = glutathione + ADP + phosphate + H(+)</text>
        <dbReference type="Rhea" id="RHEA:13557"/>
        <dbReference type="ChEBI" id="CHEBI:15378"/>
        <dbReference type="ChEBI" id="CHEBI:30616"/>
        <dbReference type="ChEBI" id="CHEBI:43474"/>
        <dbReference type="ChEBI" id="CHEBI:57305"/>
        <dbReference type="ChEBI" id="CHEBI:57925"/>
        <dbReference type="ChEBI" id="CHEBI:58173"/>
        <dbReference type="ChEBI" id="CHEBI:456216"/>
        <dbReference type="EC" id="6.3.2.3"/>
    </reaction>
    <physiologicalReaction direction="left-to-right" evidence="7">
        <dbReference type="Rhea" id="RHEA:13558"/>
    </physiologicalReaction>
</comment>
<comment type="cofactor">
    <cofactor evidence="2">
        <name>Mg(2+)</name>
        <dbReference type="ChEBI" id="CHEBI:18420"/>
    </cofactor>
    <text evidence="2">Binds 1 Mg(2+) ion per subunit.</text>
</comment>
<comment type="pathway">
    <text>Sulfur metabolism; glutathione biosynthesis; glutathione from L-cysteine and L-glutamate: step 2/2.</text>
</comment>
<comment type="subunit">
    <text evidence="2">Homodimer.</text>
</comment>
<comment type="miscellaneous">
    <text evidence="3">Present with 3430 molecules/cell in log phase SD medium.</text>
</comment>
<comment type="similarity">
    <text evidence="6">Belongs to the eukaryotic GSH synthase family.</text>
</comment>
<protein>
    <recommendedName>
        <fullName evidence="5">Glutathione synthetase GSH2</fullName>
        <shortName>GSH synthetase</shortName>
        <shortName>GSH-S</shortName>
        <ecNumber>6.3.2.3</ecNumber>
    </recommendedName>
    <alternativeName>
        <fullName>Glutathione synthase</fullName>
    </alternativeName>
</protein>
<proteinExistence type="evidence at protein level"/>
<feature type="chain" id="PRO_0000211266" description="Glutathione synthetase GSH2">
    <location>
        <begin position="1"/>
        <end position="491"/>
    </location>
</feature>
<feature type="binding site" evidence="2">
    <location>
        <position position="128"/>
    </location>
    <ligand>
        <name>substrate</name>
    </ligand>
</feature>
<feature type="binding site">
    <location>
        <position position="146"/>
    </location>
    <ligand>
        <name>ATP</name>
        <dbReference type="ChEBI" id="CHEBI:30616"/>
    </ligand>
</feature>
<feature type="binding site">
    <location>
        <position position="146"/>
    </location>
    <ligand>
        <name>Mg(2+)</name>
        <dbReference type="ChEBI" id="CHEBI:18420"/>
    </ligand>
</feature>
<feature type="binding site" evidence="1">
    <location>
        <position position="148"/>
    </location>
    <ligand>
        <name>Mg(2+)</name>
        <dbReference type="ChEBI" id="CHEBI:18420"/>
    </ligand>
</feature>
<feature type="binding site">
    <location>
        <begin position="150"/>
        <end position="153"/>
    </location>
    <ligand>
        <name>substrate</name>
    </ligand>
</feature>
<feature type="binding site">
    <location>
        <begin position="228"/>
        <end position="230"/>
    </location>
    <ligand>
        <name>substrate</name>
    </ligand>
</feature>
<feature type="binding site" evidence="2">
    <location>
        <position position="234"/>
    </location>
    <ligand>
        <name>substrate</name>
    </ligand>
</feature>
<feature type="binding site">
    <location>
        <begin position="285"/>
        <end position="288"/>
    </location>
    <ligand>
        <name>substrate</name>
    </ligand>
</feature>
<feature type="binding site">
    <location>
        <position position="324"/>
    </location>
    <ligand>
        <name>ATP</name>
        <dbReference type="ChEBI" id="CHEBI:30616"/>
    </ligand>
</feature>
<feature type="binding site">
    <location>
        <begin position="382"/>
        <end position="391"/>
    </location>
    <ligand>
        <name>ATP</name>
        <dbReference type="ChEBI" id="CHEBI:30616"/>
    </ligand>
</feature>
<feature type="binding site">
    <location>
        <position position="386"/>
    </location>
    <ligand>
        <name>Mg(2+)</name>
        <dbReference type="ChEBI" id="CHEBI:18420"/>
    </ligand>
</feature>
<feature type="binding site">
    <location>
        <position position="393"/>
    </location>
    <ligand>
        <name>ATP</name>
        <dbReference type="ChEBI" id="CHEBI:30616"/>
    </ligand>
</feature>
<feature type="binding site">
    <location>
        <begin position="415"/>
        <end position="418"/>
    </location>
    <ligand>
        <name>ATP</name>
        <dbReference type="ChEBI" id="CHEBI:30616"/>
    </ligand>
</feature>
<feature type="binding site">
    <location>
        <position position="442"/>
    </location>
    <ligand>
        <name>ATP</name>
        <dbReference type="ChEBI" id="CHEBI:30616"/>
    </ligand>
</feature>
<feature type="binding site" evidence="1">
    <location>
        <position position="467"/>
    </location>
    <ligand>
        <name>substrate</name>
    </ligand>
</feature>
<feature type="binding site">
    <location>
        <position position="469"/>
    </location>
    <ligand>
        <name>ATP</name>
        <dbReference type="ChEBI" id="CHEBI:30616"/>
    </ligand>
</feature>
<feature type="binding site" evidence="1">
    <location>
        <position position="475"/>
    </location>
    <ligand>
        <name>ATP</name>
        <dbReference type="ChEBI" id="CHEBI:30616"/>
    </ligand>
</feature>
<feature type="binding site" evidence="1">
    <location>
        <begin position="478"/>
        <end position="479"/>
    </location>
    <ligand>
        <name>substrate</name>
    </ligand>
</feature>
<feature type="helix" evidence="8">
    <location>
        <begin position="8"/>
        <end position="25"/>
    </location>
</feature>
<feature type="helix" evidence="8">
    <location>
        <begin position="34"/>
        <end position="36"/>
    </location>
</feature>
<feature type="strand" evidence="8">
    <location>
        <begin position="40"/>
        <end position="43"/>
    </location>
</feature>
<feature type="strand" evidence="8">
    <location>
        <begin position="46"/>
        <end position="49"/>
    </location>
</feature>
<feature type="strand" evidence="8">
    <location>
        <begin position="51"/>
        <end position="54"/>
    </location>
</feature>
<feature type="helix" evidence="8">
    <location>
        <begin position="55"/>
        <end position="79"/>
    </location>
</feature>
<feature type="helix" evidence="8">
    <location>
        <begin position="85"/>
        <end position="96"/>
    </location>
</feature>
<feature type="turn" evidence="8">
    <location>
        <begin position="97"/>
        <end position="100"/>
    </location>
</feature>
<feature type="helix" evidence="8">
    <location>
        <begin position="101"/>
        <end position="111"/>
    </location>
</feature>
<feature type="strand" evidence="8">
    <location>
        <begin position="123"/>
        <end position="136"/>
    </location>
</feature>
<feature type="strand" evidence="8">
    <location>
        <begin position="139"/>
        <end position="148"/>
    </location>
</feature>
<feature type="helix" evidence="8">
    <location>
        <begin position="155"/>
        <end position="170"/>
    </location>
</feature>
<feature type="helix" evidence="8">
    <location>
        <begin position="183"/>
        <end position="185"/>
    </location>
</feature>
<feature type="helix" evidence="8">
    <location>
        <begin position="191"/>
        <end position="208"/>
    </location>
</feature>
<feature type="strand" evidence="8">
    <location>
        <begin position="219"/>
        <end position="224"/>
    </location>
</feature>
<feature type="helix" evidence="8">
    <location>
        <begin position="231"/>
        <end position="243"/>
    </location>
</feature>
<feature type="strand" evidence="8">
    <location>
        <begin position="249"/>
        <end position="252"/>
    </location>
</feature>
<feature type="helix" evidence="8">
    <location>
        <begin position="254"/>
        <end position="260"/>
    </location>
</feature>
<feature type="strand" evidence="8">
    <location>
        <begin position="261"/>
        <end position="263"/>
    </location>
</feature>
<feature type="turn" evidence="8">
    <location>
        <begin position="265"/>
        <end position="267"/>
    </location>
</feature>
<feature type="strand" evidence="8">
    <location>
        <begin position="270"/>
        <end position="272"/>
    </location>
</feature>
<feature type="turn" evidence="8">
    <location>
        <begin position="273"/>
        <end position="275"/>
    </location>
</feature>
<feature type="strand" evidence="8">
    <location>
        <begin position="278"/>
        <end position="286"/>
    </location>
</feature>
<feature type="helix" evidence="8">
    <location>
        <begin position="290"/>
        <end position="292"/>
    </location>
</feature>
<feature type="helix" evidence="8">
    <location>
        <begin position="296"/>
        <end position="307"/>
    </location>
</feature>
<feature type="strand" evidence="8">
    <location>
        <begin position="308"/>
        <end position="313"/>
    </location>
</feature>
<feature type="helix" evidence="8">
    <location>
        <begin position="316"/>
        <end position="321"/>
    </location>
</feature>
<feature type="helix" evidence="8">
    <location>
        <begin position="324"/>
        <end position="329"/>
    </location>
</feature>
<feature type="helix" evidence="8">
    <location>
        <begin position="333"/>
        <end position="336"/>
    </location>
</feature>
<feature type="turn" evidence="8">
    <location>
        <begin position="337"/>
        <end position="339"/>
    </location>
</feature>
<feature type="helix" evidence="8">
    <location>
        <begin position="343"/>
        <end position="350"/>
    </location>
</feature>
<feature type="strand" evidence="8">
    <location>
        <begin position="356"/>
        <end position="358"/>
    </location>
</feature>
<feature type="strand" evidence="8">
    <location>
        <begin position="360"/>
        <end position="362"/>
    </location>
</feature>
<feature type="helix" evidence="8">
    <location>
        <begin position="363"/>
        <end position="374"/>
    </location>
</feature>
<feature type="helix" evidence="8">
    <location>
        <begin position="376"/>
        <end position="378"/>
    </location>
</feature>
<feature type="strand" evidence="8">
    <location>
        <begin position="379"/>
        <end position="385"/>
    </location>
</feature>
<feature type="helix" evidence="8">
    <location>
        <begin position="394"/>
        <end position="396"/>
    </location>
</feature>
<feature type="helix" evidence="8">
    <location>
        <begin position="397"/>
        <end position="402"/>
    </location>
</feature>
<feature type="helix" evidence="8">
    <location>
        <begin position="406"/>
        <end position="411"/>
    </location>
</feature>
<feature type="strand" evidence="8">
    <location>
        <begin position="412"/>
        <end position="416"/>
    </location>
</feature>
<feature type="strand" evidence="8">
    <location>
        <begin position="428"/>
        <end position="430"/>
    </location>
</feature>
<feature type="strand" evidence="8">
    <location>
        <begin position="433"/>
        <end position="435"/>
    </location>
</feature>
<feature type="strand" evidence="8">
    <location>
        <begin position="439"/>
        <end position="451"/>
    </location>
</feature>
<feature type="strand" evidence="8">
    <location>
        <begin position="456"/>
        <end position="469"/>
    </location>
</feature>
<feature type="strand" evidence="8">
    <location>
        <begin position="472"/>
        <end position="474"/>
    </location>
</feature>
<feature type="strand" evidence="8">
    <location>
        <begin position="477"/>
        <end position="480"/>
    </location>
</feature>
<feature type="strand" evidence="8">
    <location>
        <begin position="483"/>
        <end position="485"/>
    </location>
</feature>
<feature type="strand" evidence="8">
    <location>
        <begin position="488"/>
        <end position="491"/>
    </location>
</feature>
<reference key="1">
    <citation type="journal article" date="1998" name="Biochim. Biophys. Acta">
        <title>Molecular identification of glutathione synthetase (GSH2) gene from Saccharomyces cerevisiae.</title>
        <authorList>
            <person name="Inoue Y."/>
            <person name="Sugiyama K.I."/>
            <person name="Izawa S."/>
            <person name="Kimura A."/>
        </authorList>
    </citation>
    <scope>NUCLEOTIDE SEQUENCE [GENOMIC DNA]</scope>
    <scope>CATALYTIC ACTIVITY</scope>
    <source>
        <strain>ATCC 204508 / S288c</strain>
    </source>
</reference>
<reference key="2">
    <citation type="journal article" date="1997" name="Nature">
        <title>The nucleotide sequence of Saccharomyces cerevisiae chromosome XV.</title>
        <authorList>
            <person name="Dujon B."/>
            <person name="Albermann K."/>
            <person name="Aldea M."/>
            <person name="Alexandraki D."/>
            <person name="Ansorge W."/>
            <person name="Arino J."/>
            <person name="Benes V."/>
            <person name="Bohn C."/>
            <person name="Bolotin-Fukuhara M."/>
            <person name="Bordonne R."/>
            <person name="Boyer J."/>
            <person name="Camasses A."/>
            <person name="Casamayor A."/>
            <person name="Casas C."/>
            <person name="Cheret G."/>
            <person name="Cziepluch C."/>
            <person name="Daignan-Fornier B."/>
            <person name="Dang V.-D."/>
            <person name="de Haan M."/>
            <person name="Delius H."/>
            <person name="Durand P."/>
            <person name="Fairhead C."/>
            <person name="Feldmann H."/>
            <person name="Gaillon L."/>
            <person name="Galisson F."/>
            <person name="Gamo F.-J."/>
            <person name="Gancedo C."/>
            <person name="Goffeau A."/>
            <person name="Goulding S.E."/>
            <person name="Grivell L.A."/>
            <person name="Habbig B."/>
            <person name="Hand N.J."/>
            <person name="Hani J."/>
            <person name="Hattenhorst U."/>
            <person name="Hebling U."/>
            <person name="Hernando Y."/>
            <person name="Herrero E."/>
            <person name="Heumann K."/>
            <person name="Hiesel R."/>
            <person name="Hilger F."/>
            <person name="Hofmann B."/>
            <person name="Hollenberg C.P."/>
            <person name="Hughes B."/>
            <person name="Jauniaux J.-C."/>
            <person name="Kalogeropoulos A."/>
            <person name="Katsoulou C."/>
            <person name="Kordes E."/>
            <person name="Lafuente M.J."/>
            <person name="Landt O."/>
            <person name="Louis E.J."/>
            <person name="Maarse A.C."/>
            <person name="Madania A."/>
            <person name="Mannhaupt G."/>
            <person name="Marck C."/>
            <person name="Martin R.P."/>
            <person name="Mewes H.-W."/>
            <person name="Michaux G."/>
            <person name="Paces V."/>
            <person name="Parle-McDermott A.G."/>
            <person name="Pearson B.M."/>
            <person name="Perrin A."/>
            <person name="Pettersson B."/>
            <person name="Poch O."/>
            <person name="Pohl T.M."/>
            <person name="Poirey R."/>
            <person name="Portetelle D."/>
            <person name="Pujol A."/>
            <person name="Purnelle B."/>
            <person name="Ramezani Rad M."/>
            <person name="Rechmann S."/>
            <person name="Schwager C."/>
            <person name="Schweizer M."/>
            <person name="Sor F."/>
            <person name="Sterky F."/>
            <person name="Tarassov I.A."/>
            <person name="Teodoru C."/>
            <person name="Tettelin H."/>
            <person name="Thierry A."/>
            <person name="Tobiasch E."/>
            <person name="Tzermia M."/>
            <person name="Uhlen M."/>
            <person name="Unseld M."/>
            <person name="Valens M."/>
            <person name="Vandenbol M."/>
            <person name="Vetter I."/>
            <person name="Vlcek C."/>
            <person name="Voet M."/>
            <person name="Volckaert G."/>
            <person name="Voss H."/>
            <person name="Wambutt R."/>
            <person name="Wedler H."/>
            <person name="Wiemann S."/>
            <person name="Winsor B."/>
            <person name="Wolfe K.H."/>
            <person name="Zollner A."/>
            <person name="Zumstein E."/>
            <person name="Kleine K."/>
        </authorList>
    </citation>
    <scope>NUCLEOTIDE SEQUENCE [LARGE SCALE GENOMIC DNA]</scope>
    <source>
        <strain>ATCC 204508 / S288c</strain>
    </source>
</reference>
<reference key="3">
    <citation type="journal article" date="2014" name="G3 (Bethesda)">
        <title>The reference genome sequence of Saccharomyces cerevisiae: Then and now.</title>
        <authorList>
            <person name="Engel S.R."/>
            <person name="Dietrich F.S."/>
            <person name="Fisk D.G."/>
            <person name="Binkley G."/>
            <person name="Balakrishnan R."/>
            <person name="Costanzo M.C."/>
            <person name="Dwight S.S."/>
            <person name="Hitz B.C."/>
            <person name="Karra K."/>
            <person name="Nash R.S."/>
            <person name="Weng S."/>
            <person name="Wong E.D."/>
            <person name="Lloyd P."/>
            <person name="Skrzypek M.S."/>
            <person name="Miyasato S.R."/>
            <person name="Simison M."/>
            <person name="Cherry J.M."/>
        </authorList>
    </citation>
    <scope>GENOME REANNOTATION</scope>
    <source>
        <strain>ATCC 204508 / S288c</strain>
    </source>
</reference>
<reference key="4">
    <citation type="journal article" date="2007" name="Genome Res.">
        <title>Approaching a complete repository of sequence-verified protein-encoding clones for Saccharomyces cerevisiae.</title>
        <authorList>
            <person name="Hu Y."/>
            <person name="Rolfs A."/>
            <person name="Bhullar B."/>
            <person name="Murthy T.V.S."/>
            <person name="Zhu C."/>
            <person name="Berger M.F."/>
            <person name="Camargo A.A."/>
            <person name="Kelley F."/>
            <person name="McCarron S."/>
            <person name="Jepson D."/>
            <person name="Richardson A."/>
            <person name="Raphael J."/>
            <person name="Moreira D."/>
            <person name="Taycher E."/>
            <person name="Zuo D."/>
            <person name="Mohr S."/>
            <person name="Kane M.F."/>
            <person name="Williamson J."/>
            <person name="Simpson A.J.G."/>
            <person name="Bulyk M.L."/>
            <person name="Harlow E."/>
            <person name="Marsischky G."/>
            <person name="Kolodner R.D."/>
            <person name="LaBaer J."/>
        </authorList>
    </citation>
    <scope>NUCLEOTIDE SEQUENCE [GENOMIC DNA]</scope>
    <source>
        <strain>ATCC 204508 / S288c</strain>
    </source>
</reference>
<reference key="5">
    <citation type="journal article" date="2003" name="Nature">
        <title>Global analysis of protein expression in yeast.</title>
        <authorList>
            <person name="Ghaemmaghami S."/>
            <person name="Huh W.-K."/>
            <person name="Bower K."/>
            <person name="Howson R.W."/>
            <person name="Belle A."/>
            <person name="Dephoure N."/>
            <person name="O'Shea E.K."/>
            <person name="Weissman J.S."/>
        </authorList>
    </citation>
    <scope>LEVEL OF PROTEIN EXPRESSION [LARGE SCALE ANALYSIS]</scope>
</reference>
<reference key="6">
    <citation type="journal article" date="2002" name="Structure">
        <title>Large conformational changes in the catalytic cycle of glutathione synthase.</title>
        <authorList>
            <person name="Gogos A."/>
            <person name="Shapiro L."/>
        </authorList>
    </citation>
    <scope>X-RAY CRYSTALLOGRAPHY (1.80 ANGSTROMS) IN COMPLEX WITH SUBSTRATE AND AMP-PNP</scope>
    <scope>COFACTOR</scope>
    <scope>SUBUNIT</scope>
</reference>
<accession>Q08220</accession>
<accession>D6W218</accession>
<evidence type="ECO:0000250" key="1"/>
<evidence type="ECO:0000269" key="2">
    <source>
    </source>
</evidence>
<evidence type="ECO:0000269" key="3">
    <source>
    </source>
</evidence>
<evidence type="ECO:0000269" key="4">
    <source>
    </source>
</evidence>
<evidence type="ECO:0000303" key="5">
    <source>
    </source>
</evidence>
<evidence type="ECO:0000305" key="6"/>
<evidence type="ECO:0000305" key="7">
    <source>
    </source>
</evidence>
<evidence type="ECO:0007829" key="8">
    <source>
        <dbReference type="PDB" id="1M0W"/>
    </source>
</evidence>